<sequence length="163" mass="18097">MSQSKVEEPLAKEVLANIDIAEILNRIPHRYPFLLVDRAEDYRPHQSIVGIKCVTINEPFFQGHFPGNPVMPGVLIIEALAQTGAVLMSKSLEVETEGKTIFFMSVDNARFRTPVRPGDVIRMEVEVTRARSSIFKFKGVAKVGDKVAAEAEFAAMVVETPKL</sequence>
<accession>B0SZ10</accession>
<comment type="function">
    <text evidence="1">Involved in unsaturated fatty acids biosynthesis. Catalyzes the dehydration of short chain beta-hydroxyacyl-ACPs and long chain saturated and unsaturated beta-hydroxyacyl-ACPs.</text>
</comment>
<comment type="catalytic activity">
    <reaction evidence="1">
        <text>a (3R)-hydroxyacyl-[ACP] = a (2E)-enoyl-[ACP] + H2O</text>
        <dbReference type="Rhea" id="RHEA:13097"/>
        <dbReference type="Rhea" id="RHEA-COMP:9925"/>
        <dbReference type="Rhea" id="RHEA-COMP:9945"/>
        <dbReference type="ChEBI" id="CHEBI:15377"/>
        <dbReference type="ChEBI" id="CHEBI:78784"/>
        <dbReference type="ChEBI" id="CHEBI:78827"/>
        <dbReference type="EC" id="4.2.1.59"/>
    </reaction>
</comment>
<comment type="subcellular location">
    <subcellularLocation>
        <location evidence="1">Cytoplasm</location>
    </subcellularLocation>
</comment>
<comment type="similarity">
    <text evidence="1">Belongs to the thioester dehydratase family. FabZ subfamily.</text>
</comment>
<gene>
    <name evidence="1" type="primary">fabZ</name>
    <name type="ordered locus">Caul_2794</name>
</gene>
<name>FABZ_CAUSK</name>
<feature type="chain" id="PRO_0000340764" description="3-hydroxyacyl-[acyl-carrier-protein] dehydratase FabZ">
    <location>
        <begin position="1"/>
        <end position="163"/>
    </location>
</feature>
<feature type="active site" evidence="1">
    <location>
        <position position="64"/>
    </location>
</feature>
<protein>
    <recommendedName>
        <fullName evidence="1">3-hydroxyacyl-[acyl-carrier-protein] dehydratase FabZ</fullName>
        <ecNumber evidence="1">4.2.1.59</ecNumber>
    </recommendedName>
    <alternativeName>
        <fullName evidence="1">(3R)-hydroxymyristoyl-[acyl-carrier-protein] dehydratase</fullName>
        <shortName evidence="1">(3R)-hydroxymyristoyl-ACP dehydrase</shortName>
    </alternativeName>
    <alternativeName>
        <fullName evidence="1">Beta-hydroxyacyl-ACP dehydratase</fullName>
    </alternativeName>
</protein>
<evidence type="ECO:0000255" key="1">
    <source>
        <dbReference type="HAMAP-Rule" id="MF_00406"/>
    </source>
</evidence>
<dbReference type="EC" id="4.2.1.59" evidence="1"/>
<dbReference type="EMBL" id="CP000927">
    <property type="protein sequence ID" value="ABZ71921.1"/>
    <property type="molecule type" value="Genomic_DNA"/>
</dbReference>
<dbReference type="SMR" id="B0SZ10"/>
<dbReference type="STRING" id="366602.Caul_2794"/>
<dbReference type="KEGG" id="cak:Caul_2794"/>
<dbReference type="eggNOG" id="COG0764">
    <property type="taxonomic scope" value="Bacteria"/>
</dbReference>
<dbReference type="HOGENOM" id="CLU_078912_1_0_5"/>
<dbReference type="OrthoDB" id="9772788at2"/>
<dbReference type="GO" id="GO:0005737">
    <property type="term" value="C:cytoplasm"/>
    <property type="evidence" value="ECO:0007669"/>
    <property type="project" value="UniProtKB-SubCell"/>
</dbReference>
<dbReference type="GO" id="GO:0016020">
    <property type="term" value="C:membrane"/>
    <property type="evidence" value="ECO:0007669"/>
    <property type="project" value="GOC"/>
</dbReference>
<dbReference type="GO" id="GO:0019171">
    <property type="term" value="F:(3R)-hydroxyacyl-[acyl-carrier-protein] dehydratase activity"/>
    <property type="evidence" value="ECO:0007669"/>
    <property type="project" value="UniProtKB-EC"/>
</dbReference>
<dbReference type="GO" id="GO:0006633">
    <property type="term" value="P:fatty acid biosynthetic process"/>
    <property type="evidence" value="ECO:0007669"/>
    <property type="project" value="UniProtKB-UniRule"/>
</dbReference>
<dbReference type="GO" id="GO:0009245">
    <property type="term" value="P:lipid A biosynthetic process"/>
    <property type="evidence" value="ECO:0007669"/>
    <property type="project" value="UniProtKB-UniRule"/>
</dbReference>
<dbReference type="CDD" id="cd01288">
    <property type="entry name" value="FabZ"/>
    <property type="match status" value="1"/>
</dbReference>
<dbReference type="FunFam" id="3.10.129.10:FF:000001">
    <property type="entry name" value="3-hydroxyacyl-[acyl-carrier-protein] dehydratase FabZ"/>
    <property type="match status" value="1"/>
</dbReference>
<dbReference type="Gene3D" id="3.10.129.10">
    <property type="entry name" value="Hotdog Thioesterase"/>
    <property type="match status" value="1"/>
</dbReference>
<dbReference type="HAMAP" id="MF_00406">
    <property type="entry name" value="FabZ"/>
    <property type="match status" value="1"/>
</dbReference>
<dbReference type="InterPro" id="IPR013114">
    <property type="entry name" value="FabA_FabZ"/>
</dbReference>
<dbReference type="InterPro" id="IPR010084">
    <property type="entry name" value="FabZ"/>
</dbReference>
<dbReference type="InterPro" id="IPR029069">
    <property type="entry name" value="HotDog_dom_sf"/>
</dbReference>
<dbReference type="NCBIfam" id="TIGR01750">
    <property type="entry name" value="fabZ"/>
    <property type="match status" value="1"/>
</dbReference>
<dbReference type="NCBIfam" id="NF000582">
    <property type="entry name" value="PRK00006.1"/>
    <property type="match status" value="1"/>
</dbReference>
<dbReference type="PANTHER" id="PTHR30272">
    <property type="entry name" value="3-HYDROXYACYL-[ACYL-CARRIER-PROTEIN] DEHYDRATASE"/>
    <property type="match status" value="1"/>
</dbReference>
<dbReference type="PANTHER" id="PTHR30272:SF1">
    <property type="entry name" value="3-HYDROXYACYL-[ACYL-CARRIER-PROTEIN] DEHYDRATASE"/>
    <property type="match status" value="1"/>
</dbReference>
<dbReference type="Pfam" id="PF07977">
    <property type="entry name" value="FabA"/>
    <property type="match status" value="1"/>
</dbReference>
<dbReference type="SUPFAM" id="SSF54637">
    <property type="entry name" value="Thioesterase/thiol ester dehydrase-isomerase"/>
    <property type="match status" value="1"/>
</dbReference>
<organism>
    <name type="scientific">Caulobacter sp. (strain K31)</name>
    <dbReference type="NCBI Taxonomy" id="366602"/>
    <lineage>
        <taxon>Bacteria</taxon>
        <taxon>Pseudomonadati</taxon>
        <taxon>Pseudomonadota</taxon>
        <taxon>Alphaproteobacteria</taxon>
        <taxon>Caulobacterales</taxon>
        <taxon>Caulobacteraceae</taxon>
        <taxon>Caulobacter</taxon>
    </lineage>
</organism>
<reference key="1">
    <citation type="submission" date="2008-01" db="EMBL/GenBank/DDBJ databases">
        <title>Complete sequence of chromosome of Caulobacter sp. K31.</title>
        <authorList>
            <consortium name="US DOE Joint Genome Institute"/>
            <person name="Copeland A."/>
            <person name="Lucas S."/>
            <person name="Lapidus A."/>
            <person name="Barry K."/>
            <person name="Glavina del Rio T."/>
            <person name="Dalin E."/>
            <person name="Tice H."/>
            <person name="Pitluck S."/>
            <person name="Bruce D."/>
            <person name="Goodwin L."/>
            <person name="Thompson L.S."/>
            <person name="Brettin T."/>
            <person name="Detter J.C."/>
            <person name="Han C."/>
            <person name="Schmutz J."/>
            <person name="Larimer F."/>
            <person name="Land M."/>
            <person name="Hauser L."/>
            <person name="Kyrpides N."/>
            <person name="Kim E."/>
            <person name="Stephens C."/>
            <person name="Richardson P."/>
        </authorList>
    </citation>
    <scope>NUCLEOTIDE SEQUENCE [LARGE SCALE GENOMIC DNA]</scope>
    <source>
        <strain>K31</strain>
    </source>
</reference>
<keyword id="KW-0963">Cytoplasm</keyword>
<keyword id="KW-0441">Lipid A biosynthesis</keyword>
<keyword id="KW-0444">Lipid biosynthesis</keyword>
<keyword id="KW-0443">Lipid metabolism</keyword>
<keyword id="KW-0456">Lyase</keyword>
<proteinExistence type="inferred from homology"/>